<evidence type="ECO:0000255" key="1">
    <source>
        <dbReference type="HAMAP-Rule" id="MF_01347"/>
    </source>
</evidence>
<organism>
    <name type="scientific">Neorickettsia sennetsu (strain ATCC VR-367 / Miyayama)</name>
    <name type="common">Ehrlichia sennetsu</name>
    <dbReference type="NCBI Taxonomy" id="222891"/>
    <lineage>
        <taxon>Bacteria</taxon>
        <taxon>Pseudomonadati</taxon>
        <taxon>Pseudomonadota</taxon>
        <taxon>Alphaproteobacteria</taxon>
        <taxon>Rickettsiales</taxon>
        <taxon>Anaplasmataceae</taxon>
        <taxon>Neorickettsia</taxon>
    </lineage>
</organism>
<protein>
    <recommendedName>
        <fullName evidence="1">ATP synthase subunit beta</fullName>
        <ecNumber evidence="1">7.1.2.2</ecNumber>
    </recommendedName>
    <alternativeName>
        <fullName evidence="1">ATP synthase F1 sector subunit beta</fullName>
    </alternativeName>
    <alternativeName>
        <fullName evidence="1">F-ATPase subunit beta</fullName>
    </alternativeName>
</protein>
<gene>
    <name evidence="1" type="primary">atpD</name>
    <name type="ordered locus">NSE_0763</name>
</gene>
<reference key="1">
    <citation type="journal article" date="2006" name="PLoS Genet.">
        <title>Comparative genomics of emerging human ehrlichiosis agents.</title>
        <authorList>
            <person name="Dunning Hotopp J.C."/>
            <person name="Lin M."/>
            <person name="Madupu R."/>
            <person name="Crabtree J."/>
            <person name="Angiuoli S.V."/>
            <person name="Eisen J.A."/>
            <person name="Seshadri R."/>
            <person name="Ren Q."/>
            <person name="Wu M."/>
            <person name="Utterback T.R."/>
            <person name="Smith S."/>
            <person name="Lewis M."/>
            <person name="Khouri H."/>
            <person name="Zhang C."/>
            <person name="Niu H."/>
            <person name="Lin Q."/>
            <person name="Ohashi N."/>
            <person name="Zhi N."/>
            <person name="Nelson W.C."/>
            <person name="Brinkac L.M."/>
            <person name="Dodson R.J."/>
            <person name="Rosovitz M.J."/>
            <person name="Sundaram J.P."/>
            <person name="Daugherty S.C."/>
            <person name="Davidsen T."/>
            <person name="Durkin A.S."/>
            <person name="Gwinn M.L."/>
            <person name="Haft D.H."/>
            <person name="Selengut J.D."/>
            <person name="Sullivan S.A."/>
            <person name="Zafar N."/>
            <person name="Zhou L."/>
            <person name="Benahmed F."/>
            <person name="Forberger H."/>
            <person name="Halpin R."/>
            <person name="Mulligan S."/>
            <person name="Robinson J."/>
            <person name="White O."/>
            <person name="Rikihisa Y."/>
            <person name="Tettelin H."/>
        </authorList>
    </citation>
    <scope>NUCLEOTIDE SEQUENCE [LARGE SCALE GENOMIC DNA]</scope>
    <source>
        <strain>ATCC VR-367 / Miyayama</strain>
    </source>
</reference>
<proteinExistence type="inferred from homology"/>
<dbReference type="EC" id="7.1.2.2" evidence="1"/>
<dbReference type="EMBL" id="CP000237">
    <property type="protein sequence ID" value="ABD46313.1"/>
    <property type="molecule type" value="Genomic_DNA"/>
</dbReference>
<dbReference type="RefSeq" id="WP_011452144.1">
    <property type="nucleotide sequence ID" value="NC_007798.1"/>
</dbReference>
<dbReference type="SMR" id="Q2GD08"/>
<dbReference type="STRING" id="222891.NSE_0763"/>
<dbReference type="KEGG" id="nse:NSE_0763"/>
<dbReference type="eggNOG" id="COG0055">
    <property type="taxonomic scope" value="Bacteria"/>
</dbReference>
<dbReference type="HOGENOM" id="CLU_022398_0_2_5"/>
<dbReference type="OrthoDB" id="9801639at2"/>
<dbReference type="Proteomes" id="UP000001942">
    <property type="component" value="Chromosome"/>
</dbReference>
<dbReference type="GO" id="GO:0005886">
    <property type="term" value="C:plasma membrane"/>
    <property type="evidence" value="ECO:0007669"/>
    <property type="project" value="UniProtKB-SubCell"/>
</dbReference>
<dbReference type="GO" id="GO:0045259">
    <property type="term" value="C:proton-transporting ATP synthase complex"/>
    <property type="evidence" value="ECO:0007669"/>
    <property type="project" value="UniProtKB-KW"/>
</dbReference>
<dbReference type="GO" id="GO:0005524">
    <property type="term" value="F:ATP binding"/>
    <property type="evidence" value="ECO:0007669"/>
    <property type="project" value="UniProtKB-UniRule"/>
</dbReference>
<dbReference type="GO" id="GO:0016887">
    <property type="term" value="F:ATP hydrolysis activity"/>
    <property type="evidence" value="ECO:0007669"/>
    <property type="project" value="InterPro"/>
</dbReference>
<dbReference type="GO" id="GO:0046933">
    <property type="term" value="F:proton-transporting ATP synthase activity, rotational mechanism"/>
    <property type="evidence" value="ECO:0007669"/>
    <property type="project" value="UniProtKB-UniRule"/>
</dbReference>
<dbReference type="CDD" id="cd18110">
    <property type="entry name" value="ATP-synt_F1_beta_C"/>
    <property type="match status" value="1"/>
</dbReference>
<dbReference type="CDD" id="cd18115">
    <property type="entry name" value="ATP-synt_F1_beta_N"/>
    <property type="match status" value="1"/>
</dbReference>
<dbReference type="CDD" id="cd01133">
    <property type="entry name" value="F1-ATPase_beta_CD"/>
    <property type="match status" value="1"/>
</dbReference>
<dbReference type="FunFam" id="1.10.1140.10:FF:000001">
    <property type="entry name" value="ATP synthase subunit beta"/>
    <property type="match status" value="1"/>
</dbReference>
<dbReference type="FunFam" id="3.40.50.300:FF:000026">
    <property type="entry name" value="ATP synthase subunit beta"/>
    <property type="match status" value="1"/>
</dbReference>
<dbReference type="Gene3D" id="2.40.10.170">
    <property type="match status" value="1"/>
</dbReference>
<dbReference type="Gene3D" id="1.10.1140.10">
    <property type="entry name" value="Bovine Mitochondrial F1-atpase, Atp Synthase Beta Chain, Chain D, domain 3"/>
    <property type="match status" value="1"/>
</dbReference>
<dbReference type="Gene3D" id="3.40.50.300">
    <property type="entry name" value="P-loop containing nucleotide triphosphate hydrolases"/>
    <property type="match status" value="1"/>
</dbReference>
<dbReference type="HAMAP" id="MF_01347">
    <property type="entry name" value="ATP_synth_beta_bact"/>
    <property type="match status" value="1"/>
</dbReference>
<dbReference type="InterPro" id="IPR003593">
    <property type="entry name" value="AAA+_ATPase"/>
</dbReference>
<dbReference type="InterPro" id="IPR055190">
    <property type="entry name" value="ATP-synt_VA_C"/>
</dbReference>
<dbReference type="InterPro" id="IPR005722">
    <property type="entry name" value="ATP_synth_F1_bsu"/>
</dbReference>
<dbReference type="InterPro" id="IPR050053">
    <property type="entry name" value="ATPase_alpha/beta_chains"/>
</dbReference>
<dbReference type="InterPro" id="IPR004100">
    <property type="entry name" value="ATPase_F1/V1/A1_a/bsu_N"/>
</dbReference>
<dbReference type="InterPro" id="IPR036121">
    <property type="entry name" value="ATPase_F1/V1/A1_a/bsu_N_sf"/>
</dbReference>
<dbReference type="InterPro" id="IPR000194">
    <property type="entry name" value="ATPase_F1/V1/A1_a/bsu_nucl-bd"/>
</dbReference>
<dbReference type="InterPro" id="IPR024034">
    <property type="entry name" value="ATPase_F1/V1_b/a_C"/>
</dbReference>
<dbReference type="InterPro" id="IPR027417">
    <property type="entry name" value="P-loop_NTPase"/>
</dbReference>
<dbReference type="NCBIfam" id="TIGR01039">
    <property type="entry name" value="atpD"/>
    <property type="match status" value="1"/>
</dbReference>
<dbReference type="PANTHER" id="PTHR15184">
    <property type="entry name" value="ATP SYNTHASE"/>
    <property type="match status" value="1"/>
</dbReference>
<dbReference type="PANTHER" id="PTHR15184:SF71">
    <property type="entry name" value="ATP SYNTHASE SUBUNIT BETA, MITOCHONDRIAL"/>
    <property type="match status" value="1"/>
</dbReference>
<dbReference type="Pfam" id="PF00006">
    <property type="entry name" value="ATP-synt_ab"/>
    <property type="match status" value="1"/>
</dbReference>
<dbReference type="Pfam" id="PF02874">
    <property type="entry name" value="ATP-synt_ab_N"/>
    <property type="match status" value="1"/>
</dbReference>
<dbReference type="Pfam" id="PF22919">
    <property type="entry name" value="ATP-synt_VA_C"/>
    <property type="match status" value="1"/>
</dbReference>
<dbReference type="SMART" id="SM00382">
    <property type="entry name" value="AAA"/>
    <property type="match status" value="1"/>
</dbReference>
<dbReference type="SUPFAM" id="SSF47917">
    <property type="entry name" value="C-terminal domain of alpha and beta subunits of F1 ATP synthase"/>
    <property type="match status" value="1"/>
</dbReference>
<dbReference type="SUPFAM" id="SSF50615">
    <property type="entry name" value="N-terminal domain of alpha and beta subunits of F1 ATP synthase"/>
    <property type="match status" value="1"/>
</dbReference>
<dbReference type="SUPFAM" id="SSF52540">
    <property type="entry name" value="P-loop containing nucleoside triphosphate hydrolases"/>
    <property type="match status" value="1"/>
</dbReference>
<accession>Q2GD08</accession>
<sequence length="474" mass="51168">MPVSIGKIVRVVGPTVDVKFEDGTLPKIENALTCDNNGKILYLEVAQQLGDGIVRAVAMDSTDGLTRDKVVKDTGKPICVPVGRQTLGRIFNVVGEIIDGGGPVPEPNKVSSIYAEPPRFDMQSTSSEILETGIKVIDLLAPYSKGGKVGLFGGAGVGKTVLIMELINNIAKAYGGFSVFAGVGERTREGNDLYSEMVESGVIDKEHPEKSKVVLVYGQMNEPPGARAKVAMSALTMAEYFRDKEGQDVLFFVDNIFRFTQAGAELSTLLGRIPSAVGYQPTLATDMGRLQERITSTKNGSITSVQAIYVPADDITDPAPATSFAHLDSTTVLSRQVAEAGIYPAVDALASSAQILSPEVLGQEHYEVAQKVKGILQSYKSLQDIIAILGMEELSEEDKLTVYRARKIEKFLSQPFHVAEVFTGQPGKFVSLKDTIAGFKELVEGKCDDMPEAAFYMVGNMNEAREKAISLREK</sequence>
<keyword id="KW-0066">ATP synthesis</keyword>
<keyword id="KW-0067">ATP-binding</keyword>
<keyword id="KW-0997">Cell inner membrane</keyword>
<keyword id="KW-1003">Cell membrane</keyword>
<keyword id="KW-0139">CF(1)</keyword>
<keyword id="KW-0375">Hydrogen ion transport</keyword>
<keyword id="KW-0406">Ion transport</keyword>
<keyword id="KW-0472">Membrane</keyword>
<keyword id="KW-0547">Nucleotide-binding</keyword>
<keyword id="KW-1278">Translocase</keyword>
<keyword id="KW-0813">Transport</keyword>
<comment type="function">
    <text evidence="1">Produces ATP from ADP in the presence of a proton gradient across the membrane. The catalytic sites are hosted primarily by the beta subunits.</text>
</comment>
<comment type="catalytic activity">
    <reaction evidence="1">
        <text>ATP + H2O + 4 H(+)(in) = ADP + phosphate + 5 H(+)(out)</text>
        <dbReference type="Rhea" id="RHEA:57720"/>
        <dbReference type="ChEBI" id="CHEBI:15377"/>
        <dbReference type="ChEBI" id="CHEBI:15378"/>
        <dbReference type="ChEBI" id="CHEBI:30616"/>
        <dbReference type="ChEBI" id="CHEBI:43474"/>
        <dbReference type="ChEBI" id="CHEBI:456216"/>
        <dbReference type="EC" id="7.1.2.2"/>
    </reaction>
</comment>
<comment type="subunit">
    <text evidence="1">F-type ATPases have 2 components, CF(1) - the catalytic core - and CF(0) - the membrane proton channel. CF(1) has five subunits: alpha(3), beta(3), gamma(1), delta(1), epsilon(1). CF(0) has three main subunits: a(1), b(2) and c(9-12). The alpha and beta chains form an alternating ring which encloses part of the gamma chain. CF(1) is attached to CF(0) by a central stalk formed by the gamma and epsilon chains, while a peripheral stalk is formed by the delta and b chains.</text>
</comment>
<comment type="subcellular location">
    <subcellularLocation>
        <location evidence="1">Cell inner membrane</location>
        <topology evidence="1">Peripheral membrane protein</topology>
    </subcellularLocation>
</comment>
<comment type="similarity">
    <text evidence="1">Belongs to the ATPase alpha/beta chains family.</text>
</comment>
<feature type="chain" id="PRO_0000254314" description="ATP synthase subunit beta">
    <location>
        <begin position="1"/>
        <end position="474"/>
    </location>
</feature>
<feature type="binding site" evidence="1">
    <location>
        <begin position="153"/>
        <end position="160"/>
    </location>
    <ligand>
        <name>ATP</name>
        <dbReference type="ChEBI" id="CHEBI:30616"/>
    </ligand>
</feature>
<name>ATPB_NEOSM</name>